<sequence>MTEKARKRIVVAMSGGVDSSVTAALLKEEGHEVIGISMQVWDYSKFSAPEGEKFDTCCSLDDIHDARRVAEQIGIPFYVVNFEEEFQRLVIDDFVDEYFRGRTPNPCVRCNQRVKFELLLRKARELGADLLATGHYARIERGGDGLFHLLRGDDPGKDQSYFLFTLTQEQLARVTFPLGGMTKPEVRQLATRFGLRVAEKGESQEICFVPDNDYVRFLEDERGAGQLVGEIVDRAGTVLGHHEGTYRYTVGQRRGLGIAHPHPLYVVGVDAERRQVIVGPKEELLAPGLVATDVTWVIALATETLEAACKIRYRHHPVPCTVTVLAGNRAQVRFREPEKSVTPGQAVVFYHGDEVLGGGWIDAAMTEG</sequence>
<comment type="function">
    <text evidence="1">Catalyzes the 2-thiolation of uridine at the wobble position (U34) of tRNA, leading to the formation of s(2)U34.</text>
</comment>
<comment type="catalytic activity">
    <reaction evidence="1">
        <text>S-sulfanyl-L-cysteinyl-[protein] + uridine(34) in tRNA + AH2 + ATP = 2-thiouridine(34) in tRNA + L-cysteinyl-[protein] + A + AMP + diphosphate + H(+)</text>
        <dbReference type="Rhea" id="RHEA:47032"/>
        <dbReference type="Rhea" id="RHEA-COMP:10131"/>
        <dbReference type="Rhea" id="RHEA-COMP:11726"/>
        <dbReference type="Rhea" id="RHEA-COMP:11727"/>
        <dbReference type="Rhea" id="RHEA-COMP:11728"/>
        <dbReference type="ChEBI" id="CHEBI:13193"/>
        <dbReference type="ChEBI" id="CHEBI:15378"/>
        <dbReference type="ChEBI" id="CHEBI:17499"/>
        <dbReference type="ChEBI" id="CHEBI:29950"/>
        <dbReference type="ChEBI" id="CHEBI:30616"/>
        <dbReference type="ChEBI" id="CHEBI:33019"/>
        <dbReference type="ChEBI" id="CHEBI:61963"/>
        <dbReference type="ChEBI" id="CHEBI:65315"/>
        <dbReference type="ChEBI" id="CHEBI:87170"/>
        <dbReference type="ChEBI" id="CHEBI:456215"/>
        <dbReference type="EC" id="2.8.1.13"/>
    </reaction>
</comment>
<comment type="subcellular location">
    <subcellularLocation>
        <location evidence="1">Cytoplasm</location>
    </subcellularLocation>
</comment>
<comment type="similarity">
    <text evidence="1">Belongs to the MnmA/TRMU family.</text>
</comment>
<gene>
    <name evidence="1" type="primary">mnmA</name>
    <name type="ordered locus">Gmet_0873</name>
</gene>
<accession>Q39XA9</accession>
<evidence type="ECO:0000255" key="1">
    <source>
        <dbReference type="HAMAP-Rule" id="MF_00144"/>
    </source>
</evidence>
<keyword id="KW-0067">ATP-binding</keyword>
<keyword id="KW-0963">Cytoplasm</keyword>
<keyword id="KW-1015">Disulfide bond</keyword>
<keyword id="KW-0547">Nucleotide-binding</keyword>
<keyword id="KW-1185">Reference proteome</keyword>
<keyword id="KW-0694">RNA-binding</keyword>
<keyword id="KW-0808">Transferase</keyword>
<keyword id="KW-0819">tRNA processing</keyword>
<keyword id="KW-0820">tRNA-binding</keyword>
<proteinExistence type="inferred from homology"/>
<name>MNMA_GEOMG</name>
<reference key="1">
    <citation type="journal article" date="2009" name="BMC Microbiol.">
        <title>The genome sequence of Geobacter metallireducens: features of metabolism, physiology and regulation common and dissimilar to Geobacter sulfurreducens.</title>
        <authorList>
            <person name="Aklujkar M."/>
            <person name="Krushkal J."/>
            <person name="DiBartolo G."/>
            <person name="Lapidus A."/>
            <person name="Land M.L."/>
            <person name="Lovley D.R."/>
        </authorList>
    </citation>
    <scope>NUCLEOTIDE SEQUENCE [LARGE SCALE GENOMIC DNA]</scope>
    <source>
        <strain>ATCC 53774 / DSM 7210 / GS-15</strain>
    </source>
</reference>
<protein>
    <recommendedName>
        <fullName evidence="1">tRNA-specific 2-thiouridylase MnmA</fullName>
        <ecNumber evidence="1">2.8.1.13</ecNumber>
    </recommendedName>
</protein>
<organism>
    <name type="scientific">Geobacter metallireducens (strain ATCC 53774 / DSM 7210 / GS-15)</name>
    <dbReference type="NCBI Taxonomy" id="269799"/>
    <lineage>
        <taxon>Bacteria</taxon>
        <taxon>Pseudomonadati</taxon>
        <taxon>Thermodesulfobacteriota</taxon>
        <taxon>Desulfuromonadia</taxon>
        <taxon>Geobacterales</taxon>
        <taxon>Geobacteraceae</taxon>
        <taxon>Geobacter</taxon>
    </lineage>
</organism>
<feature type="chain" id="PRO_0000349647" description="tRNA-specific 2-thiouridylase MnmA">
    <location>
        <begin position="1"/>
        <end position="368"/>
    </location>
</feature>
<feature type="region of interest" description="Interaction with tRNA" evidence="1">
    <location>
        <begin position="157"/>
        <end position="159"/>
    </location>
</feature>
<feature type="region of interest" description="Interaction with tRNA" evidence="1">
    <location>
        <begin position="312"/>
        <end position="313"/>
    </location>
</feature>
<feature type="active site" description="Nucleophile" evidence="1">
    <location>
        <position position="110"/>
    </location>
</feature>
<feature type="active site" description="Cysteine persulfide intermediate" evidence="1">
    <location>
        <position position="207"/>
    </location>
</feature>
<feature type="binding site" evidence="1">
    <location>
        <begin position="12"/>
        <end position="19"/>
    </location>
    <ligand>
        <name>ATP</name>
        <dbReference type="ChEBI" id="CHEBI:30616"/>
    </ligand>
</feature>
<feature type="binding site" evidence="1">
    <location>
        <position position="38"/>
    </location>
    <ligand>
        <name>ATP</name>
        <dbReference type="ChEBI" id="CHEBI:30616"/>
    </ligand>
</feature>
<feature type="binding site" evidence="1">
    <location>
        <position position="134"/>
    </location>
    <ligand>
        <name>ATP</name>
        <dbReference type="ChEBI" id="CHEBI:30616"/>
    </ligand>
</feature>
<feature type="site" description="Interaction with tRNA" evidence="1">
    <location>
        <position position="135"/>
    </location>
</feature>
<feature type="site" description="Interaction with tRNA" evidence="1">
    <location>
        <position position="345"/>
    </location>
</feature>
<feature type="disulfide bond" description="Alternate" evidence="1">
    <location>
        <begin position="110"/>
        <end position="207"/>
    </location>
</feature>
<dbReference type="EC" id="2.8.1.13" evidence="1"/>
<dbReference type="EMBL" id="CP000148">
    <property type="protein sequence ID" value="ABB31115.1"/>
    <property type="molecule type" value="Genomic_DNA"/>
</dbReference>
<dbReference type="RefSeq" id="WP_004513019.1">
    <property type="nucleotide sequence ID" value="NC_007517.1"/>
</dbReference>
<dbReference type="SMR" id="Q39XA9"/>
<dbReference type="STRING" id="269799.Gmet_0873"/>
<dbReference type="KEGG" id="gme:Gmet_0873"/>
<dbReference type="eggNOG" id="COG0482">
    <property type="taxonomic scope" value="Bacteria"/>
</dbReference>
<dbReference type="HOGENOM" id="CLU_035188_0_0_7"/>
<dbReference type="Proteomes" id="UP000007073">
    <property type="component" value="Chromosome"/>
</dbReference>
<dbReference type="GO" id="GO:0005737">
    <property type="term" value="C:cytoplasm"/>
    <property type="evidence" value="ECO:0007669"/>
    <property type="project" value="UniProtKB-SubCell"/>
</dbReference>
<dbReference type="GO" id="GO:0005524">
    <property type="term" value="F:ATP binding"/>
    <property type="evidence" value="ECO:0007669"/>
    <property type="project" value="UniProtKB-KW"/>
</dbReference>
<dbReference type="GO" id="GO:0000049">
    <property type="term" value="F:tRNA binding"/>
    <property type="evidence" value="ECO:0007669"/>
    <property type="project" value="UniProtKB-KW"/>
</dbReference>
<dbReference type="GO" id="GO:0103016">
    <property type="term" value="F:tRNA-uridine 2-sulfurtransferase activity"/>
    <property type="evidence" value="ECO:0007669"/>
    <property type="project" value="UniProtKB-EC"/>
</dbReference>
<dbReference type="GO" id="GO:0002143">
    <property type="term" value="P:tRNA wobble position uridine thiolation"/>
    <property type="evidence" value="ECO:0007669"/>
    <property type="project" value="TreeGrafter"/>
</dbReference>
<dbReference type="CDD" id="cd01998">
    <property type="entry name" value="MnmA_TRMU-like"/>
    <property type="match status" value="1"/>
</dbReference>
<dbReference type="FunFam" id="2.40.30.10:FF:000023">
    <property type="entry name" value="tRNA-specific 2-thiouridylase MnmA"/>
    <property type="match status" value="1"/>
</dbReference>
<dbReference type="FunFam" id="3.40.50.620:FF:000115">
    <property type="entry name" value="tRNA-specific 2-thiouridylase MnmA"/>
    <property type="match status" value="1"/>
</dbReference>
<dbReference type="Gene3D" id="2.30.30.280">
    <property type="entry name" value="Adenine nucleotide alpha hydrolases-like domains"/>
    <property type="match status" value="1"/>
</dbReference>
<dbReference type="Gene3D" id="3.40.50.620">
    <property type="entry name" value="HUPs"/>
    <property type="match status" value="1"/>
</dbReference>
<dbReference type="Gene3D" id="2.40.30.10">
    <property type="entry name" value="Translation factors"/>
    <property type="match status" value="1"/>
</dbReference>
<dbReference type="HAMAP" id="MF_00144">
    <property type="entry name" value="tRNA_thiouridyl_MnmA"/>
    <property type="match status" value="1"/>
</dbReference>
<dbReference type="InterPro" id="IPR004506">
    <property type="entry name" value="MnmA-like"/>
</dbReference>
<dbReference type="InterPro" id="IPR046885">
    <property type="entry name" value="MnmA-like_C"/>
</dbReference>
<dbReference type="InterPro" id="IPR046884">
    <property type="entry name" value="MnmA-like_central"/>
</dbReference>
<dbReference type="InterPro" id="IPR023382">
    <property type="entry name" value="MnmA-like_central_sf"/>
</dbReference>
<dbReference type="InterPro" id="IPR014729">
    <property type="entry name" value="Rossmann-like_a/b/a_fold"/>
</dbReference>
<dbReference type="NCBIfam" id="NF001138">
    <property type="entry name" value="PRK00143.1"/>
    <property type="match status" value="1"/>
</dbReference>
<dbReference type="NCBIfam" id="TIGR00420">
    <property type="entry name" value="trmU"/>
    <property type="match status" value="1"/>
</dbReference>
<dbReference type="PANTHER" id="PTHR11933:SF5">
    <property type="entry name" value="MITOCHONDRIAL TRNA-SPECIFIC 2-THIOURIDYLASE 1"/>
    <property type="match status" value="1"/>
</dbReference>
<dbReference type="PANTHER" id="PTHR11933">
    <property type="entry name" value="TRNA 5-METHYLAMINOMETHYL-2-THIOURIDYLATE -METHYLTRANSFERASE"/>
    <property type="match status" value="1"/>
</dbReference>
<dbReference type="Pfam" id="PF03054">
    <property type="entry name" value="tRNA_Me_trans"/>
    <property type="match status" value="1"/>
</dbReference>
<dbReference type="Pfam" id="PF20258">
    <property type="entry name" value="tRNA_Me_trans_C"/>
    <property type="match status" value="1"/>
</dbReference>
<dbReference type="Pfam" id="PF20259">
    <property type="entry name" value="tRNA_Me_trans_M"/>
    <property type="match status" value="1"/>
</dbReference>
<dbReference type="SUPFAM" id="SSF52402">
    <property type="entry name" value="Adenine nucleotide alpha hydrolases-like"/>
    <property type="match status" value="1"/>
</dbReference>